<feature type="chain" id="PRO_0000420235" description="NAD(P)H-dependent FAD/FMN reductase GTNG_3158">
    <location>
        <begin position="1"/>
        <end position="185"/>
    </location>
</feature>
<proteinExistence type="evidence at protein level"/>
<name>NFADR_GEOTN</name>
<sequence length="185" mass="20725">MKLLGISGTLVGTKTCILVEQVLVEAKRICPEVDIQLLDLKDYQVEFCDGRQQSSYNEDTQKVIELVSVADCYVIGTPIFQGSITGALKNLFDLISPQALRHKVMGFVANGGTYQHYLVIENQLKPIASFFRAFVAPGSVYAHTDHFNEKNELVDPEVRERVAQLAWEVVHMHWSLKSGGVHAHR</sequence>
<comment type="function">
    <text evidence="2">Involved in the pathway of tryptophan degradation. Reduces FAD/FMN to FADH(2)/FMNH(2), which are subsequently used for the hydroxylation of anthranilate. It can reduce either FAD or flavin mononucleotide (FMN) but prefers FAD. The enzyme has a slight preference for NADPH as acceptor.</text>
</comment>
<comment type="catalytic activity">
    <reaction evidence="2">
        <text>FADH2 + NAD(+) = FAD + NADH + 2 H(+)</text>
        <dbReference type="Rhea" id="RHEA:30147"/>
        <dbReference type="ChEBI" id="CHEBI:15378"/>
        <dbReference type="ChEBI" id="CHEBI:57540"/>
        <dbReference type="ChEBI" id="CHEBI:57692"/>
        <dbReference type="ChEBI" id="CHEBI:57945"/>
        <dbReference type="ChEBI" id="CHEBI:58307"/>
        <dbReference type="EC" id="1.5.1.45"/>
    </reaction>
</comment>
<comment type="catalytic activity">
    <reaction evidence="2">
        <text>FADH2 + NADP(+) = FAD + NADPH + 2 H(+)</text>
        <dbReference type="Rhea" id="RHEA:30151"/>
        <dbReference type="ChEBI" id="CHEBI:15378"/>
        <dbReference type="ChEBI" id="CHEBI:57692"/>
        <dbReference type="ChEBI" id="CHEBI:57783"/>
        <dbReference type="ChEBI" id="CHEBI:58307"/>
        <dbReference type="ChEBI" id="CHEBI:58349"/>
        <dbReference type="EC" id="1.5.1.45"/>
    </reaction>
</comment>
<comment type="biophysicochemical properties">
    <kinetics>
        <Vmax evidence="2">58.2 umol/min/mg enzyme with FAD as substrate for the reverse reaction (with NADPH as cofactor)</Vmax>
        <Vmax evidence="2">55.5 umol/min/mg enzyme with FMN as substrate for the reverse reaction (with NADPH as cofactor)</Vmax>
        <text evidence="2">With FAD as substrate NADH can be used as an electron donor, with 95% activity relative to NADPH.</text>
    </kinetics>
</comment>
<comment type="subunit">
    <text evidence="2">Anthranilate 3-monooxygenase consists of a reductase component (GTNG_3158) and an oxygenase component HpaH.</text>
</comment>
<organism>
    <name type="scientific">Geobacillus thermodenitrificans (strain NG80-2)</name>
    <dbReference type="NCBI Taxonomy" id="420246"/>
    <lineage>
        <taxon>Bacteria</taxon>
        <taxon>Bacillati</taxon>
        <taxon>Bacillota</taxon>
        <taxon>Bacilli</taxon>
        <taxon>Bacillales</taxon>
        <taxon>Anoxybacillaceae</taxon>
        <taxon>Geobacillus</taxon>
    </lineage>
</organism>
<gene>
    <name type="ordered locus">GTNG_3158</name>
</gene>
<keyword id="KW-0274">FAD</keyword>
<keyword id="KW-0285">Flavoprotein</keyword>
<keyword id="KW-0288">FMN</keyword>
<keyword id="KW-0520">NAD</keyword>
<keyword id="KW-0521">NADP</keyword>
<keyword id="KW-0560">Oxidoreductase</keyword>
<dbReference type="EC" id="1.5.1.45"/>
<dbReference type="EMBL" id="CP000557">
    <property type="protein sequence ID" value="ABO68503.1"/>
    <property type="molecule type" value="Genomic_DNA"/>
</dbReference>
<dbReference type="RefSeq" id="WP_011888287.1">
    <property type="nucleotide sequence ID" value="NC_009328.1"/>
</dbReference>
<dbReference type="SMR" id="A4IT49"/>
<dbReference type="KEGG" id="gtn:GTNG_3158"/>
<dbReference type="eggNOG" id="COG0431">
    <property type="taxonomic scope" value="Bacteria"/>
</dbReference>
<dbReference type="HOGENOM" id="CLU_055322_3_3_9"/>
<dbReference type="Proteomes" id="UP000001578">
    <property type="component" value="Chromosome"/>
</dbReference>
<dbReference type="GO" id="GO:0016646">
    <property type="term" value="F:oxidoreductase activity, acting on the CH-NH group of donors, NAD or NADP as acceptor"/>
    <property type="evidence" value="ECO:0000314"/>
    <property type="project" value="UniProtKB"/>
</dbReference>
<dbReference type="GO" id="GO:0043421">
    <property type="term" value="P:anthranilate catabolic process"/>
    <property type="evidence" value="ECO:0000314"/>
    <property type="project" value="UniProtKB"/>
</dbReference>
<dbReference type="GO" id="GO:0006569">
    <property type="term" value="P:L-tryptophan catabolic process"/>
    <property type="evidence" value="ECO:0000314"/>
    <property type="project" value="UniProtKB"/>
</dbReference>
<dbReference type="Gene3D" id="3.40.50.360">
    <property type="match status" value="1"/>
</dbReference>
<dbReference type="InterPro" id="IPR029039">
    <property type="entry name" value="Flavoprotein-like_sf"/>
</dbReference>
<dbReference type="InterPro" id="IPR005025">
    <property type="entry name" value="FMN_Rdtase-like_dom"/>
</dbReference>
<dbReference type="InterPro" id="IPR051814">
    <property type="entry name" value="NAD(P)H-dep_FMN_reductase"/>
</dbReference>
<dbReference type="PANTHER" id="PTHR43408">
    <property type="entry name" value="FMN REDUCTASE (NADPH)"/>
    <property type="match status" value="1"/>
</dbReference>
<dbReference type="PANTHER" id="PTHR43408:SF2">
    <property type="entry name" value="FMN REDUCTASE (NADPH)"/>
    <property type="match status" value="1"/>
</dbReference>
<dbReference type="Pfam" id="PF03358">
    <property type="entry name" value="FMN_red"/>
    <property type="match status" value="1"/>
</dbReference>
<dbReference type="SUPFAM" id="SSF52218">
    <property type="entry name" value="Flavoproteins"/>
    <property type="match status" value="1"/>
</dbReference>
<accession>A4IT49</accession>
<protein>
    <recommendedName>
        <fullName evidence="1 3">NAD(P)H-dependent FAD/FMN reductase GTNG_3158</fullName>
        <shortName evidence="3">FAD/FMN reductase</shortName>
        <ecNumber>1.5.1.45</ecNumber>
    </recommendedName>
</protein>
<reference evidence="5" key="1">
    <citation type="journal article" date="2007" name="Proc. Natl. Acad. Sci. U.S.A.">
        <title>Genome and proteome of long-chain alkane degrading Geobacillus thermodenitrificans NG80-2 isolated from a deep-subsurface oil reservoir.</title>
        <authorList>
            <person name="Feng L."/>
            <person name="Wang W."/>
            <person name="Cheng J."/>
            <person name="Ren Y."/>
            <person name="Zhao G."/>
            <person name="Gao C."/>
            <person name="Tang Y."/>
            <person name="Liu X."/>
            <person name="Han W."/>
            <person name="Peng X."/>
            <person name="Liu R."/>
            <person name="Wang L."/>
        </authorList>
    </citation>
    <scope>NUCLEOTIDE SEQUENCE [LARGE SCALE GENOMIC DNA]</scope>
    <source>
        <strain>NG80-2</strain>
    </source>
</reference>
<reference evidence="4" key="2">
    <citation type="journal article" date="2010" name="Microbiology">
        <title>Characterization of the anthranilate degradation pathway in Geobacillus thermodenitrificans NG80-2.</title>
        <authorList>
            <person name="Liu X."/>
            <person name="Dong Y."/>
            <person name="Li X."/>
            <person name="Ren Y."/>
            <person name="Li Y."/>
            <person name="Wang W."/>
            <person name="Wang L."/>
            <person name="Feng L."/>
        </authorList>
    </citation>
    <scope>FUNCTION</scope>
    <scope>CATALYTIC ACTIVITY</scope>
    <scope>BIOPHYSICOCHEMICAL PROPERTIES</scope>
    <scope>SUBSTRATE SPECIFICITY</scope>
    <scope>SUBUNIT</scope>
    <source>
        <strain evidence="2">NG80-2</strain>
    </source>
</reference>
<evidence type="ECO:0000250" key="1">
    <source>
        <dbReference type="UniProtKB" id="Q9USJ6"/>
    </source>
</evidence>
<evidence type="ECO:0000269" key="2">
    <source>
    </source>
</evidence>
<evidence type="ECO:0000303" key="3">
    <source>
    </source>
</evidence>
<evidence type="ECO:0000305" key="4"/>
<evidence type="ECO:0000312" key="5">
    <source>
        <dbReference type="EMBL" id="ABO68503.1"/>
    </source>
</evidence>